<dbReference type="EMBL" id="AE015451">
    <property type="protein sequence ID" value="AAN66010.1"/>
    <property type="molecule type" value="Genomic_DNA"/>
</dbReference>
<dbReference type="RefSeq" id="NP_742546.1">
    <property type="nucleotide sequence ID" value="NC_002947.4"/>
</dbReference>
<dbReference type="RefSeq" id="WP_010951729.1">
    <property type="nucleotide sequence ID" value="NZ_CP169744.1"/>
</dbReference>
<dbReference type="PDB" id="1XTO">
    <property type="method" value="X-ray"/>
    <property type="resolution" value="2.80 A"/>
    <property type="chains" value="A=1-303"/>
</dbReference>
<dbReference type="PDB" id="3JXP">
    <property type="method" value="X-ray"/>
    <property type="resolution" value="2.20 A"/>
    <property type="chains" value="A=1-303"/>
</dbReference>
<dbReference type="PDB" id="4Z5Y">
    <property type="method" value="X-ray"/>
    <property type="resolution" value="1.56 A"/>
    <property type="chains" value="A=1-303"/>
</dbReference>
<dbReference type="PDB" id="4Z5Z">
    <property type="method" value="X-ray"/>
    <property type="resolution" value="2.54 A"/>
    <property type="chains" value="A=1-303"/>
</dbReference>
<dbReference type="PDB" id="4Z60">
    <property type="method" value="X-ray"/>
    <property type="resolution" value="2.50 A"/>
    <property type="chains" value="A=1-303"/>
</dbReference>
<dbReference type="PDB" id="4Z67">
    <property type="method" value="X-ray"/>
    <property type="resolution" value="1.50 A"/>
    <property type="chains" value="A=1-303"/>
</dbReference>
<dbReference type="PDB" id="4Z6X">
    <property type="method" value="X-ray"/>
    <property type="resolution" value="1.68 A"/>
    <property type="chains" value="A=1-303"/>
</dbReference>
<dbReference type="PDB" id="6E13">
    <property type="method" value="X-ray"/>
    <property type="resolution" value="2.35 A"/>
    <property type="chains" value="A=1-303"/>
</dbReference>
<dbReference type="PDBsum" id="1XTO"/>
<dbReference type="PDBsum" id="3JXP"/>
<dbReference type="PDBsum" id="4Z5Y"/>
<dbReference type="PDBsum" id="4Z5Z"/>
<dbReference type="PDBsum" id="4Z60"/>
<dbReference type="PDBsum" id="4Z67"/>
<dbReference type="PDBsum" id="4Z6X"/>
<dbReference type="PDBsum" id="6E13"/>
<dbReference type="SMR" id="Q88QV5"/>
<dbReference type="STRING" id="160488.PP_0379"/>
<dbReference type="PaxDb" id="160488-PP_0379"/>
<dbReference type="GeneID" id="83677656"/>
<dbReference type="KEGG" id="ppu:PP_0379"/>
<dbReference type="PATRIC" id="fig|160488.4.peg.409"/>
<dbReference type="eggNOG" id="COG1235">
    <property type="taxonomic scope" value="Bacteria"/>
</dbReference>
<dbReference type="HOGENOM" id="CLU_061120_0_0_6"/>
<dbReference type="OrthoDB" id="9778305at2"/>
<dbReference type="PhylomeDB" id="Q88QV5"/>
<dbReference type="BioCyc" id="PPUT160488:G1G01-414-MONOMER"/>
<dbReference type="UniPathway" id="UPA00539"/>
<dbReference type="EvolutionaryTrace" id="Q88QV5"/>
<dbReference type="Proteomes" id="UP000000556">
    <property type="component" value="Chromosome"/>
</dbReference>
<dbReference type="GO" id="GO:0018189">
    <property type="term" value="P:pyrroloquinoline quinone biosynthetic process"/>
    <property type="evidence" value="ECO:0007669"/>
    <property type="project" value="UniProtKB-UniRule"/>
</dbReference>
<dbReference type="CDD" id="cd16274">
    <property type="entry name" value="PQQB-like_MBL-fold"/>
    <property type="match status" value="1"/>
</dbReference>
<dbReference type="Gene3D" id="3.60.15.10">
    <property type="entry name" value="Ribonuclease Z/Hydroxyacylglutathione hydrolase-like"/>
    <property type="match status" value="1"/>
</dbReference>
<dbReference type="HAMAP" id="MF_00653">
    <property type="entry name" value="PQQ_syn_PqqB"/>
    <property type="match status" value="1"/>
</dbReference>
<dbReference type="InterPro" id="IPR001279">
    <property type="entry name" value="Metallo-B-lactamas"/>
</dbReference>
<dbReference type="InterPro" id="IPR011842">
    <property type="entry name" value="PQQ_synth_PqqB"/>
</dbReference>
<dbReference type="InterPro" id="IPR036866">
    <property type="entry name" value="RibonucZ/Hydroxyglut_hydro"/>
</dbReference>
<dbReference type="NCBIfam" id="TIGR02108">
    <property type="entry name" value="PQQ_syn_pqqB"/>
    <property type="match status" value="1"/>
</dbReference>
<dbReference type="PANTHER" id="PTHR42663:SF7">
    <property type="entry name" value="COENZYME PQQ SYNTHESIS PROTEIN B"/>
    <property type="match status" value="1"/>
</dbReference>
<dbReference type="PANTHER" id="PTHR42663">
    <property type="entry name" value="HYDROLASE C777.06C-RELATED-RELATED"/>
    <property type="match status" value="1"/>
</dbReference>
<dbReference type="Pfam" id="PF12706">
    <property type="entry name" value="Lactamase_B_2"/>
    <property type="match status" value="1"/>
</dbReference>
<dbReference type="SUPFAM" id="SSF56281">
    <property type="entry name" value="Metallo-hydrolase/oxidoreductase"/>
    <property type="match status" value="1"/>
</dbReference>
<proteinExistence type="evidence at protein level"/>
<keyword id="KW-0002">3D-structure</keyword>
<keyword id="KW-0884">PQQ biosynthesis</keyword>
<keyword id="KW-1185">Reference proteome</keyword>
<keyword id="KW-0813">Transport</keyword>
<sequence>MYIQVLGSAAGGGFPQWNCNCVNCKGYRDGTLKATARTQSSIALSDDGVHWILCNASPDIRAQLQAFAPMQPARALRDTGINAIVLLDSQIDHTTGLLSLREGCPHQVWCTDMVHQDLTTGFPLFNMLSHWNGGLQWNRIELEGSFVIDACPNLKFTPFPLRSAAPPYSPHRFDPHPGDNLGLMVEDTRTGGKLFYAPGLGQVDEKLLAMMHGADCLLVDGTLWEDDEMQRRGVGTRTGREMGHLAQNGPGGMLEVLDGFPRQRKVLIHINNTNPILDENSPERAEVLRRGVEVAFDGMSIEL</sequence>
<name>PQQB_PSEPK</name>
<gene>
    <name evidence="1" type="primary">pqqB</name>
    <name type="ordered locus">PP_0379</name>
</gene>
<evidence type="ECO:0000255" key="1">
    <source>
        <dbReference type="HAMAP-Rule" id="MF_00653"/>
    </source>
</evidence>
<evidence type="ECO:0007829" key="2">
    <source>
        <dbReference type="PDB" id="4Z67"/>
    </source>
</evidence>
<accession>Q88QV5</accession>
<organism>
    <name type="scientific">Pseudomonas putida (strain ATCC 47054 / DSM 6125 / CFBP 8728 / NCIMB 11950 / KT2440)</name>
    <dbReference type="NCBI Taxonomy" id="160488"/>
    <lineage>
        <taxon>Bacteria</taxon>
        <taxon>Pseudomonadati</taxon>
        <taxon>Pseudomonadota</taxon>
        <taxon>Gammaproteobacteria</taxon>
        <taxon>Pseudomonadales</taxon>
        <taxon>Pseudomonadaceae</taxon>
        <taxon>Pseudomonas</taxon>
    </lineage>
</organism>
<comment type="function">
    <text evidence="1">May be involved in the transport of PQQ or its precursor to the periplasm.</text>
</comment>
<comment type="pathway">
    <text evidence="1">Cofactor biosynthesis; pyrroloquinoline quinone biosynthesis.</text>
</comment>
<comment type="similarity">
    <text evidence="1">Belongs to the PqqB family.</text>
</comment>
<feature type="chain" id="PRO_0000220005" description="Coenzyme PQQ synthesis protein B">
    <location>
        <begin position="1"/>
        <end position="303"/>
    </location>
</feature>
<feature type="strand" evidence="2">
    <location>
        <begin position="1"/>
        <end position="7"/>
    </location>
</feature>
<feature type="turn" evidence="2">
    <location>
        <begin position="11"/>
        <end position="13"/>
    </location>
</feature>
<feature type="turn" evidence="2">
    <location>
        <begin position="15"/>
        <end position="18"/>
    </location>
</feature>
<feature type="helix" evidence="2">
    <location>
        <begin position="22"/>
        <end position="28"/>
    </location>
</feature>
<feature type="strand" evidence="2">
    <location>
        <begin position="39"/>
        <end position="55"/>
    </location>
</feature>
<feature type="helix" evidence="2">
    <location>
        <begin position="60"/>
        <end position="65"/>
    </location>
</feature>
<feature type="helix" evidence="2">
    <location>
        <begin position="68"/>
        <end position="70"/>
    </location>
</feature>
<feature type="strand" evidence="2">
    <location>
        <begin position="74"/>
        <end position="77"/>
    </location>
</feature>
<feature type="strand" evidence="2">
    <location>
        <begin position="80"/>
        <end position="85"/>
    </location>
</feature>
<feature type="helix" evidence="2">
    <location>
        <begin position="91"/>
        <end position="94"/>
    </location>
</feature>
<feature type="helix" evidence="2">
    <location>
        <begin position="95"/>
        <end position="103"/>
    </location>
</feature>
<feature type="strand" evidence="2">
    <location>
        <begin position="106"/>
        <end position="111"/>
    </location>
</feature>
<feature type="helix" evidence="2">
    <location>
        <begin position="112"/>
        <end position="117"/>
    </location>
</feature>
<feature type="turn" evidence="2">
    <location>
        <begin position="118"/>
        <end position="121"/>
    </location>
</feature>
<feature type="helix" evidence="2">
    <location>
        <begin position="124"/>
        <end position="128"/>
    </location>
</feature>
<feature type="turn" evidence="2">
    <location>
        <begin position="129"/>
        <end position="133"/>
    </location>
</feature>
<feature type="strand" evidence="2">
    <location>
        <begin position="135"/>
        <end position="140"/>
    </location>
</feature>
<feature type="strand" evidence="2">
    <location>
        <begin position="142"/>
        <end position="144"/>
    </location>
</feature>
<feature type="strand" evidence="2">
    <location>
        <begin position="154"/>
        <end position="160"/>
    </location>
</feature>
<feature type="turn" evidence="2">
    <location>
        <begin position="170"/>
        <end position="173"/>
    </location>
</feature>
<feature type="strand" evidence="2">
    <location>
        <begin position="179"/>
        <end position="187"/>
    </location>
</feature>
<feature type="turn" evidence="2">
    <location>
        <begin position="188"/>
        <end position="190"/>
    </location>
</feature>
<feature type="strand" evidence="2">
    <location>
        <begin position="193"/>
        <end position="198"/>
    </location>
</feature>
<feature type="helix" evidence="2">
    <location>
        <begin position="205"/>
        <end position="212"/>
    </location>
</feature>
<feature type="strand" evidence="2">
    <location>
        <begin position="215"/>
        <end position="220"/>
    </location>
</feature>
<feature type="helix" evidence="2">
    <location>
        <begin position="228"/>
        <end position="231"/>
    </location>
</feature>
<feature type="helix" evidence="2">
    <location>
        <begin position="239"/>
        <end position="242"/>
    </location>
</feature>
<feature type="strand" evidence="2">
    <location>
        <begin position="247"/>
        <end position="249"/>
    </location>
</feature>
<feature type="helix" evidence="2">
    <location>
        <begin position="253"/>
        <end position="257"/>
    </location>
</feature>
<feature type="strand" evidence="2">
    <location>
        <begin position="263"/>
        <end position="270"/>
    </location>
</feature>
<feature type="helix" evidence="2">
    <location>
        <begin position="275"/>
        <end position="277"/>
    </location>
</feature>
<feature type="helix" evidence="2">
    <location>
        <begin position="282"/>
        <end position="289"/>
    </location>
</feature>
<feature type="strand" evidence="2">
    <location>
        <begin position="292"/>
        <end position="294"/>
    </location>
</feature>
<feature type="strand" evidence="2">
    <location>
        <begin position="300"/>
        <end position="303"/>
    </location>
</feature>
<reference key="1">
    <citation type="journal article" date="2002" name="Environ. Microbiol.">
        <title>Complete genome sequence and comparative analysis of the metabolically versatile Pseudomonas putida KT2440.</title>
        <authorList>
            <person name="Nelson K.E."/>
            <person name="Weinel C."/>
            <person name="Paulsen I.T."/>
            <person name="Dodson R.J."/>
            <person name="Hilbert H."/>
            <person name="Martins dos Santos V.A.P."/>
            <person name="Fouts D.E."/>
            <person name="Gill S.R."/>
            <person name="Pop M."/>
            <person name="Holmes M."/>
            <person name="Brinkac L.M."/>
            <person name="Beanan M.J."/>
            <person name="DeBoy R.T."/>
            <person name="Daugherty S.C."/>
            <person name="Kolonay J.F."/>
            <person name="Madupu R."/>
            <person name="Nelson W.C."/>
            <person name="White O."/>
            <person name="Peterson J.D."/>
            <person name="Khouri H.M."/>
            <person name="Hance I."/>
            <person name="Chris Lee P."/>
            <person name="Holtzapple E.K."/>
            <person name="Scanlan D."/>
            <person name="Tran K."/>
            <person name="Moazzez A."/>
            <person name="Utterback T.R."/>
            <person name="Rizzo M."/>
            <person name="Lee K."/>
            <person name="Kosack D."/>
            <person name="Moestl D."/>
            <person name="Wedler H."/>
            <person name="Lauber J."/>
            <person name="Stjepandic D."/>
            <person name="Hoheisel J."/>
            <person name="Straetz M."/>
            <person name="Heim S."/>
            <person name="Kiewitz C."/>
            <person name="Eisen J.A."/>
            <person name="Timmis K.N."/>
            <person name="Duesterhoeft A."/>
            <person name="Tuemmler B."/>
            <person name="Fraser C.M."/>
        </authorList>
    </citation>
    <scope>NUCLEOTIDE SEQUENCE [LARGE SCALE GENOMIC DNA]</scope>
    <source>
        <strain>ATCC 47054 / DSM 6125 / CFBP 8728 / NCIMB 11950 / KT2440</strain>
    </source>
</reference>
<protein>
    <recommendedName>
        <fullName evidence="1">Coenzyme PQQ synthesis protein B</fullName>
    </recommendedName>
    <alternativeName>
        <fullName evidence="1">Pyrroloquinoline quinone biosynthesis protein B</fullName>
    </alternativeName>
</protein>